<proteinExistence type="inferred from homology"/>
<sequence length="209" mass="23226">MKNLFLTSSFKDVVPLFTEFESNLQGKTVTFIPTASTVEEVVFYVEAGKKALEKLGLFVVELDVATESLDHIAATLRKNDFIYVTGGNTFFLLQELKRTGADKLILEEIAAGKLYIGESAGAVITSPNIAYIQSMDSPKKAEQLTNYDALNLVDFCTLPHYNNIPFKKITQKIVADYTKSLKMHPISNHEAILVRDEEVITKLANGKTD</sequence>
<comment type="similarity">
    <text evidence="2">Belongs to the peptidase S51 family.</text>
</comment>
<protein>
    <recommendedName>
        <fullName>Uncharacterized peptidase Lin0382</fullName>
        <ecNumber>3.4.21.-</ecNumber>
    </recommendedName>
</protein>
<keyword id="KW-0378">Hydrolase</keyword>
<keyword id="KW-0645">Protease</keyword>
<keyword id="KW-0720">Serine protease</keyword>
<evidence type="ECO:0000250" key="1"/>
<evidence type="ECO:0000305" key="2"/>
<dbReference type="EC" id="3.4.21.-"/>
<dbReference type="EMBL" id="AL596164">
    <property type="protein sequence ID" value="CAC95615.1"/>
    <property type="molecule type" value="Genomic_DNA"/>
</dbReference>
<dbReference type="PIR" id="AG1480">
    <property type="entry name" value="AG1480"/>
</dbReference>
<dbReference type="RefSeq" id="WP_010990370.1">
    <property type="nucleotide sequence ID" value="NC_003212.1"/>
</dbReference>
<dbReference type="SMR" id="Q92ES6"/>
<dbReference type="STRING" id="272626.gene:17564709"/>
<dbReference type="KEGG" id="lin:lin0382"/>
<dbReference type="eggNOG" id="COG3340">
    <property type="taxonomic scope" value="Bacteria"/>
</dbReference>
<dbReference type="HOGENOM" id="CLU_090997_0_0_9"/>
<dbReference type="OrthoDB" id="9778515at2"/>
<dbReference type="Proteomes" id="UP000002513">
    <property type="component" value="Chromosome"/>
</dbReference>
<dbReference type="GO" id="GO:0008236">
    <property type="term" value="F:serine-type peptidase activity"/>
    <property type="evidence" value="ECO:0007669"/>
    <property type="project" value="UniProtKB-KW"/>
</dbReference>
<dbReference type="GO" id="GO:0006508">
    <property type="term" value="P:proteolysis"/>
    <property type="evidence" value="ECO:0007669"/>
    <property type="project" value="UniProtKB-KW"/>
</dbReference>
<dbReference type="FunFam" id="3.40.50.880:FF:000094">
    <property type="entry name" value="Uncharacterized peptidase Lmo0363"/>
    <property type="match status" value="1"/>
</dbReference>
<dbReference type="Gene3D" id="3.40.50.880">
    <property type="match status" value="1"/>
</dbReference>
<dbReference type="InterPro" id="IPR029062">
    <property type="entry name" value="Class_I_gatase-like"/>
</dbReference>
<dbReference type="InterPro" id="IPR005320">
    <property type="entry name" value="Peptidase_S51"/>
</dbReference>
<dbReference type="PANTHER" id="PTHR20842:SF0">
    <property type="entry name" value="ALPHA-ASPARTYL DIPEPTIDASE"/>
    <property type="match status" value="1"/>
</dbReference>
<dbReference type="PANTHER" id="PTHR20842">
    <property type="entry name" value="PROTEASE S51 ALPHA-ASPARTYL DIPEPTIDASE"/>
    <property type="match status" value="1"/>
</dbReference>
<dbReference type="Pfam" id="PF03575">
    <property type="entry name" value="Peptidase_S51"/>
    <property type="match status" value="1"/>
</dbReference>
<dbReference type="SUPFAM" id="SSF52317">
    <property type="entry name" value="Class I glutamine amidotransferase-like"/>
    <property type="match status" value="1"/>
</dbReference>
<organism>
    <name type="scientific">Listeria innocua serovar 6a (strain ATCC BAA-680 / CLIP 11262)</name>
    <dbReference type="NCBI Taxonomy" id="272626"/>
    <lineage>
        <taxon>Bacteria</taxon>
        <taxon>Bacillati</taxon>
        <taxon>Bacillota</taxon>
        <taxon>Bacilli</taxon>
        <taxon>Bacillales</taxon>
        <taxon>Listeriaceae</taxon>
        <taxon>Listeria</taxon>
    </lineage>
</organism>
<name>Y382_LISIN</name>
<accession>Q92ES6</accession>
<gene>
    <name type="ordered locus">lin0382</name>
</gene>
<feature type="chain" id="PRO_0000209968" description="Uncharacterized peptidase Lin0382">
    <location>
        <begin position="1"/>
        <end position="209"/>
    </location>
</feature>
<feature type="active site" description="Charge relay system" evidence="1">
    <location>
        <position position="119"/>
    </location>
</feature>
<feature type="active site" description="Charge relay system" evidence="1">
    <location>
        <position position="160"/>
    </location>
</feature>
<reference key="1">
    <citation type="journal article" date="2001" name="Science">
        <title>Comparative genomics of Listeria species.</title>
        <authorList>
            <person name="Glaser P."/>
            <person name="Frangeul L."/>
            <person name="Buchrieser C."/>
            <person name="Rusniok C."/>
            <person name="Amend A."/>
            <person name="Baquero F."/>
            <person name="Berche P."/>
            <person name="Bloecker H."/>
            <person name="Brandt P."/>
            <person name="Chakraborty T."/>
            <person name="Charbit A."/>
            <person name="Chetouani F."/>
            <person name="Couve E."/>
            <person name="de Daruvar A."/>
            <person name="Dehoux P."/>
            <person name="Domann E."/>
            <person name="Dominguez-Bernal G."/>
            <person name="Duchaud E."/>
            <person name="Durant L."/>
            <person name="Dussurget O."/>
            <person name="Entian K.-D."/>
            <person name="Fsihi H."/>
            <person name="Garcia-del Portillo F."/>
            <person name="Garrido P."/>
            <person name="Gautier L."/>
            <person name="Goebel W."/>
            <person name="Gomez-Lopez N."/>
            <person name="Hain T."/>
            <person name="Hauf J."/>
            <person name="Jackson D."/>
            <person name="Jones L.-M."/>
            <person name="Kaerst U."/>
            <person name="Kreft J."/>
            <person name="Kuhn M."/>
            <person name="Kunst F."/>
            <person name="Kurapkat G."/>
            <person name="Madueno E."/>
            <person name="Maitournam A."/>
            <person name="Mata Vicente J."/>
            <person name="Ng E."/>
            <person name="Nedjari H."/>
            <person name="Nordsiek G."/>
            <person name="Novella S."/>
            <person name="de Pablos B."/>
            <person name="Perez-Diaz J.-C."/>
            <person name="Purcell R."/>
            <person name="Remmel B."/>
            <person name="Rose M."/>
            <person name="Schlueter T."/>
            <person name="Simoes N."/>
            <person name="Tierrez A."/>
            <person name="Vazquez-Boland J.-A."/>
            <person name="Voss H."/>
            <person name="Wehland J."/>
            <person name="Cossart P."/>
        </authorList>
    </citation>
    <scope>NUCLEOTIDE SEQUENCE [LARGE SCALE GENOMIC DNA]</scope>
    <source>
        <strain>ATCC BAA-680 / CLIP 11262</strain>
    </source>
</reference>